<reference key="1">
    <citation type="journal article" date="1998" name="Plant Mol. Biol.">
        <title>Stress responses in alfalfa (Medicago sativa L). XXII. cDNA cloning and characterization of an elicitor-inducible isoflavone 7-O-methyltransferase.</title>
        <authorList>
            <person name="He X.-Z."/>
            <person name="Reddy J.T."/>
            <person name="Dixon R.A."/>
        </authorList>
    </citation>
    <scope>NUCLEOTIDE SEQUENCE [MRNA]</scope>
</reference>
<reference key="2">
    <citation type="journal article" date="1996" name="Arch. Biochem. Biophys.">
        <title>Affinity chromatography, substrate/product specificity, and amino acid sequence analysis of an isoflavone O-methyltransferase from alfalfa (Medicago sativa L.).</title>
        <authorList>
            <person name="He X.-Z."/>
            <person name="Dixon R.A."/>
        </authorList>
    </citation>
    <scope>PROTEIN SEQUENCE OF 23-31; 77-105 AND 327-337</scope>
    <scope>CHARACTERIZATION</scope>
</reference>
<reference key="3">
    <citation type="journal article" date="2001" name="Nat. Struct. Biol.">
        <title>Structures of two natural product methyltransferases reveal the basis for substrate specificity in plant O-methyltransferases.</title>
        <authorList>
            <person name="Zubieta C."/>
            <person name="He X.-Z."/>
            <person name="Dixon R.A."/>
            <person name="Noel J.P."/>
        </authorList>
    </citation>
    <scope>X-RAY CRYSTALLOGRAPHY (1.4 ANGSTROMS) IN COMPLEX WITH SUBSTRATES</scope>
    <scope>SUBUNIT</scope>
</reference>
<proteinExistence type="evidence at protein level"/>
<accession>O24529</accession>
<sequence length="352" mass="39604">MASSINGRKPSEIFKAQALLYKHIYAFIDSMSLKWAVEMNIPNIIQNHGKPISLSNLVSILQVPSSKIGNVRRLMRYLAHNGFFEIITKEEESYALTVASELLVRGSDLCLAPMVECVLDPTLSGSYHELKKWIYEEDLTLFGVTLGSGFWDFLDKNPEYNTSFNDAMASDSKLINLALRDCDFVFDGLESIVDVGGGTGTTAKIICETFPKLKCIVFDRPQVVENLSGSNNLTYVGGDMFTSIPNADAVLLKYILHNWTDKDCLRILKKCKEAVTNDGKRGKVTIIDMVIDKKKDENQVTQIKLLMDVNMACLNGKERNEEEWKKLFIEAGFQHYKISPLTGFLSLIEIYP</sequence>
<feature type="chain" id="PRO_0000204437" description="Isoflavone-7-O-methyltransferase 8">
    <location>
        <begin position="1"/>
        <end position="352"/>
    </location>
</feature>
<feature type="active site" description="Proton acceptor">
    <location>
        <position position="257"/>
    </location>
</feature>
<feature type="binding site">
    <location>
        <begin position="118"/>
        <end position="127"/>
    </location>
    <ligand>
        <name>substrate</name>
    </ligand>
</feature>
<feature type="binding site">
    <location>
        <position position="196"/>
    </location>
    <ligand>
        <name>S-adenosyl-L-methionine</name>
        <dbReference type="ChEBI" id="CHEBI:59789"/>
    </ligand>
</feature>
<feature type="binding site">
    <location>
        <position position="219"/>
    </location>
    <ligand>
        <name>S-adenosyl-L-methionine</name>
        <dbReference type="ChEBI" id="CHEBI:59789"/>
    </ligand>
</feature>
<feature type="binding site">
    <location>
        <position position="239"/>
    </location>
    <ligand>
        <name>S-adenosyl-L-methionine</name>
        <dbReference type="ChEBI" id="CHEBI:59789"/>
    </ligand>
</feature>
<feature type="binding site">
    <location>
        <position position="240"/>
    </location>
    <ligand>
        <name>S-adenosyl-L-methionine</name>
        <dbReference type="ChEBI" id="CHEBI:59789"/>
    </ligand>
</feature>
<feature type="binding site">
    <location>
        <position position="253"/>
    </location>
    <ligand>
        <name>S-adenosyl-L-methionine</name>
        <dbReference type="ChEBI" id="CHEBI:59789"/>
    </ligand>
</feature>
<feature type="helix" evidence="3">
    <location>
        <begin position="12"/>
        <end position="24"/>
    </location>
</feature>
<feature type="helix" evidence="3">
    <location>
        <begin position="27"/>
        <end position="38"/>
    </location>
</feature>
<feature type="helix" evidence="3">
    <location>
        <begin position="41"/>
        <end position="48"/>
    </location>
</feature>
<feature type="helix" evidence="3">
    <location>
        <begin position="54"/>
        <end position="61"/>
    </location>
</feature>
<feature type="helix" evidence="3">
    <location>
        <begin position="65"/>
        <end position="67"/>
    </location>
</feature>
<feature type="helix" evidence="3">
    <location>
        <begin position="68"/>
        <end position="80"/>
    </location>
</feature>
<feature type="strand" evidence="3">
    <location>
        <begin position="83"/>
        <end position="96"/>
    </location>
</feature>
<feature type="helix" evidence="3">
    <location>
        <begin position="98"/>
        <end position="101"/>
    </location>
</feature>
<feature type="strand" evidence="3">
    <location>
        <begin position="107"/>
        <end position="109"/>
    </location>
</feature>
<feature type="helix" evidence="3">
    <location>
        <begin position="112"/>
        <end position="118"/>
    </location>
</feature>
<feature type="helix" evidence="3">
    <location>
        <begin position="121"/>
        <end position="125"/>
    </location>
</feature>
<feature type="helix" evidence="3">
    <location>
        <begin position="126"/>
        <end position="129"/>
    </location>
</feature>
<feature type="helix" evidence="3">
    <location>
        <begin position="130"/>
        <end position="134"/>
    </location>
</feature>
<feature type="helix" evidence="3">
    <location>
        <begin position="141"/>
        <end position="146"/>
    </location>
</feature>
<feature type="helix" evidence="3">
    <location>
        <begin position="150"/>
        <end position="156"/>
    </location>
</feature>
<feature type="helix" evidence="3">
    <location>
        <begin position="158"/>
        <end position="170"/>
    </location>
</feature>
<feature type="helix" evidence="3">
    <location>
        <begin position="172"/>
        <end position="180"/>
    </location>
</feature>
<feature type="helix" evidence="3">
    <location>
        <begin position="183"/>
        <end position="186"/>
    </location>
</feature>
<feature type="strand" evidence="3">
    <location>
        <begin position="190"/>
        <end position="195"/>
    </location>
</feature>
<feature type="helix" evidence="3">
    <location>
        <begin position="201"/>
        <end position="209"/>
    </location>
</feature>
<feature type="strand" evidence="3">
    <location>
        <begin position="214"/>
        <end position="219"/>
    </location>
</feature>
<feature type="helix" evidence="3">
    <location>
        <begin position="221"/>
        <end position="224"/>
    </location>
</feature>
<feature type="strand" evidence="3">
    <location>
        <begin position="233"/>
        <end position="237"/>
    </location>
</feature>
<feature type="turn" evidence="3">
    <location>
        <begin position="240"/>
        <end position="242"/>
    </location>
</feature>
<feature type="strand" evidence="3">
    <location>
        <begin position="248"/>
        <end position="254"/>
    </location>
</feature>
<feature type="helix" evidence="3">
    <location>
        <begin position="256"/>
        <end position="258"/>
    </location>
</feature>
<feature type="helix" evidence="3">
    <location>
        <begin position="261"/>
        <end position="275"/>
    </location>
</feature>
<feature type="helix" evidence="3">
    <location>
        <begin position="277"/>
        <end position="279"/>
    </location>
</feature>
<feature type="strand" evidence="3">
    <location>
        <begin position="283"/>
        <end position="288"/>
    </location>
</feature>
<feature type="turn" evidence="3">
    <location>
        <begin position="293"/>
        <end position="295"/>
    </location>
</feature>
<feature type="helix" evidence="3">
    <location>
        <begin position="298"/>
        <end position="310"/>
    </location>
</feature>
<feature type="helix" evidence="3">
    <location>
        <begin position="311"/>
        <end position="314"/>
    </location>
</feature>
<feature type="helix" evidence="3">
    <location>
        <begin position="321"/>
        <end position="330"/>
    </location>
</feature>
<feature type="strand" evidence="3">
    <location>
        <begin position="335"/>
        <end position="342"/>
    </location>
</feature>
<feature type="strand" evidence="3">
    <location>
        <begin position="345"/>
        <end position="351"/>
    </location>
</feature>
<comment type="function">
    <text>Transfers a methyl group to 7-hydroxyls of the isoflavones daidzein, genistein and 6,7,4'-trihydroxyisoflavone. Can also methylate (+)6a-hydroxymaackiain with lower efficiency.</text>
</comment>
<comment type="catalytic activity">
    <reaction>
        <text>a 7-hydroxyisoflavone + S-adenosyl-L-methionine = a 7-methoxyisoflavone + S-adenosyl-L-homocysteine + H(+)</text>
        <dbReference type="Rhea" id="RHEA:17933"/>
        <dbReference type="ChEBI" id="CHEBI:15378"/>
        <dbReference type="ChEBI" id="CHEBI:55465"/>
        <dbReference type="ChEBI" id="CHEBI:57856"/>
        <dbReference type="ChEBI" id="CHEBI:59789"/>
        <dbReference type="ChEBI" id="CHEBI:140356"/>
        <dbReference type="EC" id="2.1.1.150"/>
    </reaction>
</comment>
<comment type="pathway">
    <text>Phytoalexin biosynthesis; medicarpin biosynthesis.</text>
</comment>
<comment type="subunit">
    <text evidence="2">Homodimer.</text>
</comment>
<comment type="similarity">
    <text evidence="1">Belongs to the class I-like SAM-binding methyltransferase superfamily. Cation-independent O-methyltransferase family. COMT subfamily.</text>
</comment>
<dbReference type="EC" id="2.1.1.150"/>
<dbReference type="EMBL" id="U97125">
    <property type="protein sequence ID" value="AAC49928.1"/>
    <property type="molecule type" value="mRNA"/>
</dbReference>
<dbReference type="PIR" id="T09707">
    <property type="entry name" value="T09707"/>
</dbReference>
<dbReference type="PDB" id="1FP2">
    <property type="method" value="X-ray"/>
    <property type="resolution" value="1.40 A"/>
    <property type="chains" value="A=1-352"/>
</dbReference>
<dbReference type="PDB" id="6CIG">
    <property type="method" value="X-ray"/>
    <property type="resolution" value="1.65 A"/>
    <property type="chains" value="A=1-352"/>
</dbReference>
<dbReference type="PDBsum" id="1FP2"/>
<dbReference type="PDBsum" id="6CIG"/>
<dbReference type="SMR" id="O24529"/>
<dbReference type="KEGG" id="ag:AAC49928"/>
<dbReference type="BRENDA" id="2.1.1.150">
    <property type="organism ID" value="3078"/>
</dbReference>
<dbReference type="BRENDA" id="2.1.1.270">
    <property type="organism ID" value="3078"/>
</dbReference>
<dbReference type="UniPathway" id="UPA00902"/>
<dbReference type="EvolutionaryTrace" id="O24529"/>
<dbReference type="GO" id="GO:0033800">
    <property type="term" value="F:isoflavone 7-O-methyltransferase activity"/>
    <property type="evidence" value="ECO:0007669"/>
    <property type="project" value="UniProtKB-EC"/>
</dbReference>
<dbReference type="GO" id="GO:0046983">
    <property type="term" value="F:protein dimerization activity"/>
    <property type="evidence" value="ECO:0007669"/>
    <property type="project" value="InterPro"/>
</dbReference>
<dbReference type="GO" id="GO:0032259">
    <property type="term" value="P:methylation"/>
    <property type="evidence" value="ECO:0007669"/>
    <property type="project" value="UniProtKB-KW"/>
</dbReference>
<dbReference type="FunFam" id="1.10.10.10:FF:000213">
    <property type="entry name" value="Coniferyl alcohol 9-O-methyltransferase"/>
    <property type="match status" value="1"/>
</dbReference>
<dbReference type="FunFam" id="3.40.50.150:FF:000057">
    <property type="entry name" value="O-methyltransferase ZRP4"/>
    <property type="match status" value="1"/>
</dbReference>
<dbReference type="Gene3D" id="3.40.50.150">
    <property type="entry name" value="Vaccinia Virus protein VP39"/>
    <property type="match status" value="1"/>
</dbReference>
<dbReference type="Gene3D" id="1.10.10.10">
    <property type="entry name" value="Winged helix-like DNA-binding domain superfamily/Winged helix DNA-binding domain"/>
    <property type="match status" value="1"/>
</dbReference>
<dbReference type="InterPro" id="IPR016461">
    <property type="entry name" value="COMT-like"/>
</dbReference>
<dbReference type="InterPro" id="IPR001077">
    <property type="entry name" value="O_MeTrfase_dom"/>
</dbReference>
<dbReference type="InterPro" id="IPR012967">
    <property type="entry name" value="Plant_O-MeTrfase_dimerisation"/>
</dbReference>
<dbReference type="InterPro" id="IPR029063">
    <property type="entry name" value="SAM-dependent_MTases_sf"/>
</dbReference>
<dbReference type="InterPro" id="IPR036388">
    <property type="entry name" value="WH-like_DNA-bd_sf"/>
</dbReference>
<dbReference type="InterPro" id="IPR036390">
    <property type="entry name" value="WH_DNA-bd_sf"/>
</dbReference>
<dbReference type="PANTHER" id="PTHR11746">
    <property type="entry name" value="O-METHYLTRANSFERASE"/>
    <property type="match status" value="1"/>
</dbReference>
<dbReference type="Pfam" id="PF08100">
    <property type="entry name" value="Dimerisation"/>
    <property type="match status" value="1"/>
</dbReference>
<dbReference type="Pfam" id="PF00891">
    <property type="entry name" value="Methyltransf_2"/>
    <property type="match status" value="1"/>
</dbReference>
<dbReference type="PIRSF" id="PIRSF005739">
    <property type="entry name" value="O-mtase"/>
    <property type="match status" value="1"/>
</dbReference>
<dbReference type="SUPFAM" id="SSF53335">
    <property type="entry name" value="S-adenosyl-L-methionine-dependent methyltransferases"/>
    <property type="match status" value="1"/>
</dbReference>
<dbReference type="SUPFAM" id="SSF46785">
    <property type="entry name" value="Winged helix' DNA-binding domain"/>
    <property type="match status" value="1"/>
</dbReference>
<dbReference type="PROSITE" id="PS51683">
    <property type="entry name" value="SAM_OMT_II"/>
    <property type="match status" value="1"/>
</dbReference>
<organism>
    <name type="scientific">Medicago sativa</name>
    <name type="common">Alfalfa</name>
    <dbReference type="NCBI Taxonomy" id="3879"/>
    <lineage>
        <taxon>Eukaryota</taxon>
        <taxon>Viridiplantae</taxon>
        <taxon>Streptophyta</taxon>
        <taxon>Embryophyta</taxon>
        <taxon>Tracheophyta</taxon>
        <taxon>Spermatophyta</taxon>
        <taxon>Magnoliopsida</taxon>
        <taxon>eudicotyledons</taxon>
        <taxon>Gunneridae</taxon>
        <taxon>Pentapetalae</taxon>
        <taxon>rosids</taxon>
        <taxon>fabids</taxon>
        <taxon>Fabales</taxon>
        <taxon>Fabaceae</taxon>
        <taxon>Papilionoideae</taxon>
        <taxon>50 kb inversion clade</taxon>
        <taxon>NPAAA clade</taxon>
        <taxon>Hologalegina</taxon>
        <taxon>IRL clade</taxon>
        <taxon>Trifolieae</taxon>
        <taxon>Medicago</taxon>
    </lineage>
</organism>
<name>7OMT8_MEDSA</name>
<evidence type="ECO:0000255" key="1">
    <source>
        <dbReference type="PROSITE-ProRule" id="PRU01020"/>
    </source>
</evidence>
<evidence type="ECO:0000269" key="2">
    <source>
    </source>
</evidence>
<evidence type="ECO:0007829" key="3">
    <source>
        <dbReference type="PDB" id="1FP2"/>
    </source>
</evidence>
<keyword id="KW-0002">3D-structure</keyword>
<keyword id="KW-0903">Direct protein sequencing</keyword>
<keyword id="KW-0489">Methyltransferase</keyword>
<keyword id="KW-0949">S-adenosyl-L-methionine</keyword>
<keyword id="KW-0808">Transferase</keyword>
<protein>
    <recommendedName>
        <fullName>Isoflavone-7-O-methyltransferase 8</fullName>
        <ecNumber>2.1.1.150</ecNumber>
    </recommendedName>
    <alternativeName>
        <fullName>7-IOMT-8</fullName>
    </alternativeName>
    <alternativeName>
        <fullName>Isoflavone-O-methyltransferase 8</fullName>
    </alternativeName>
</protein>